<name>YQGF_SHEDO</name>
<comment type="function">
    <text evidence="1">Could be a nuclease involved in processing of the 5'-end of pre-16S rRNA.</text>
</comment>
<comment type="subcellular location">
    <subcellularLocation>
        <location evidence="1">Cytoplasm</location>
    </subcellularLocation>
</comment>
<comment type="similarity">
    <text evidence="1">Belongs to the YqgF nuclease family.</text>
</comment>
<protein>
    <recommendedName>
        <fullName evidence="1">Putative pre-16S rRNA nuclease</fullName>
        <ecNumber evidence="1">3.1.-.-</ecNumber>
    </recommendedName>
</protein>
<sequence>MTMNQTVLGFDYGTKSIGVAVGQSITASASPLLALKAQDGIPNWDEIEKLIKEWQPDLVVVGLPLNMDGTEQDITQRAKKFANRISGRFGVKVLTQDERLTTADAKARLFELGGYKALTKGQVDAVSAVLIIESYFENQYD</sequence>
<dbReference type="EC" id="3.1.-.-" evidence="1"/>
<dbReference type="EMBL" id="CP000302">
    <property type="protein sequence ID" value="ABE55952.1"/>
    <property type="molecule type" value="Genomic_DNA"/>
</dbReference>
<dbReference type="RefSeq" id="WP_011497103.1">
    <property type="nucleotide sequence ID" value="NC_007954.1"/>
</dbReference>
<dbReference type="SMR" id="Q12KS4"/>
<dbReference type="STRING" id="318161.Sden_2673"/>
<dbReference type="KEGG" id="sdn:Sden_2673"/>
<dbReference type="eggNOG" id="COG0816">
    <property type="taxonomic scope" value="Bacteria"/>
</dbReference>
<dbReference type="HOGENOM" id="CLU_098240_3_0_6"/>
<dbReference type="Proteomes" id="UP000001982">
    <property type="component" value="Chromosome"/>
</dbReference>
<dbReference type="GO" id="GO:0005829">
    <property type="term" value="C:cytosol"/>
    <property type="evidence" value="ECO:0007669"/>
    <property type="project" value="TreeGrafter"/>
</dbReference>
<dbReference type="GO" id="GO:0004518">
    <property type="term" value="F:nuclease activity"/>
    <property type="evidence" value="ECO:0007669"/>
    <property type="project" value="UniProtKB-KW"/>
</dbReference>
<dbReference type="GO" id="GO:0000967">
    <property type="term" value="P:rRNA 5'-end processing"/>
    <property type="evidence" value="ECO:0007669"/>
    <property type="project" value="UniProtKB-UniRule"/>
</dbReference>
<dbReference type="CDD" id="cd16964">
    <property type="entry name" value="YqgF"/>
    <property type="match status" value="1"/>
</dbReference>
<dbReference type="FunFam" id="3.30.420.140:FF:000002">
    <property type="entry name" value="Putative pre-16S rRNA nuclease"/>
    <property type="match status" value="1"/>
</dbReference>
<dbReference type="Gene3D" id="3.30.420.140">
    <property type="entry name" value="YqgF/RNase H-like domain"/>
    <property type="match status" value="1"/>
</dbReference>
<dbReference type="HAMAP" id="MF_00651">
    <property type="entry name" value="Nuclease_YqgF"/>
    <property type="match status" value="1"/>
</dbReference>
<dbReference type="InterPro" id="IPR012337">
    <property type="entry name" value="RNaseH-like_sf"/>
</dbReference>
<dbReference type="InterPro" id="IPR005227">
    <property type="entry name" value="YqgF"/>
</dbReference>
<dbReference type="InterPro" id="IPR006641">
    <property type="entry name" value="YqgF/RNaseH-like_dom"/>
</dbReference>
<dbReference type="InterPro" id="IPR037027">
    <property type="entry name" value="YqgF/RNaseH-like_dom_sf"/>
</dbReference>
<dbReference type="NCBIfam" id="TIGR00250">
    <property type="entry name" value="RNAse_H_YqgF"/>
    <property type="match status" value="1"/>
</dbReference>
<dbReference type="PANTHER" id="PTHR33317">
    <property type="entry name" value="POLYNUCLEOTIDYL TRANSFERASE, RIBONUCLEASE H-LIKE SUPERFAMILY PROTEIN"/>
    <property type="match status" value="1"/>
</dbReference>
<dbReference type="PANTHER" id="PTHR33317:SF4">
    <property type="entry name" value="POLYNUCLEOTIDYL TRANSFERASE, RIBONUCLEASE H-LIKE SUPERFAMILY PROTEIN"/>
    <property type="match status" value="1"/>
</dbReference>
<dbReference type="Pfam" id="PF03652">
    <property type="entry name" value="RuvX"/>
    <property type="match status" value="1"/>
</dbReference>
<dbReference type="SMART" id="SM00732">
    <property type="entry name" value="YqgFc"/>
    <property type="match status" value="1"/>
</dbReference>
<dbReference type="SUPFAM" id="SSF53098">
    <property type="entry name" value="Ribonuclease H-like"/>
    <property type="match status" value="1"/>
</dbReference>
<reference key="1">
    <citation type="submission" date="2006-03" db="EMBL/GenBank/DDBJ databases">
        <title>Complete sequence of Shewanella denitrificans OS217.</title>
        <authorList>
            <consortium name="US DOE Joint Genome Institute"/>
            <person name="Copeland A."/>
            <person name="Lucas S."/>
            <person name="Lapidus A."/>
            <person name="Barry K."/>
            <person name="Detter J.C."/>
            <person name="Glavina del Rio T."/>
            <person name="Hammon N."/>
            <person name="Israni S."/>
            <person name="Dalin E."/>
            <person name="Tice H."/>
            <person name="Pitluck S."/>
            <person name="Brettin T."/>
            <person name="Bruce D."/>
            <person name="Han C."/>
            <person name="Tapia R."/>
            <person name="Gilna P."/>
            <person name="Kiss H."/>
            <person name="Schmutz J."/>
            <person name="Larimer F."/>
            <person name="Land M."/>
            <person name="Hauser L."/>
            <person name="Kyrpides N."/>
            <person name="Lykidis A."/>
            <person name="Richardson P."/>
        </authorList>
    </citation>
    <scope>NUCLEOTIDE SEQUENCE [LARGE SCALE GENOMIC DNA]</scope>
    <source>
        <strain>OS217 / ATCC BAA-1090 / DSM 15013</strain>
    </source>
</reference>
<organism>
    <name type="scientific">Shewanella denitrificans (strain OS217 / ATCC BAA-1090 / DSM 15013)</name>
    <dbReference type="NCBI Taxonomy" id="318161"/>
    <lineage>
        <taxon>Bacteria</taxon>
        <taxon>Pseudomonadati</taxon>
        <taxon>Pseudomonadota</taxon>
        <taxon>Gammaproteobacteria</taxon>
        <taxon>Alteromonadales</taxon>
        <taxon>Shewanellaceae</taxon>
        <taxon>Shewanella</taxon>
    </lineage>
</organism>
<feature type="chain" id="PRO_1000061566" description="Putative pre-16S rRNA nuclease">
    <location>
        <begin position="1"/>
        <end position="141"/>
    </location>
</feature>
<proteinExistence type="inferred from homology"/>
<keyword id="KW-0963">Cytoplasm</keyword>
<keyword id="KW-0378">Hydrolase</keyword>
<keyword id="KW-0540">Nuclease</keyword>
<keyword id="KW-1185">Reference proteome</keyword>
<keyword id="KW-0690">Ribosome biogenesis</keyword>
<accession>Q12KS4</accession>
<evidence type="ECO:0000255" key="1">
    <source>
        <dbReference type="HAMAP-Rule" id="MF_00651"/>
    </source>
</evidence>
<gene>
    <name type="ordered locus">Sden_2673</name>
</gene>